<accession>O20030</accession>
<accession>B7U1H8</accession>
<geneLocation type="chloroplast"/>
<comment type="function">
    <text>Seems to be required for the assembly of the photosystem I complex.</text>
</comment>
<comment type="subcellular location">
    <subcellularLocation>
        <location>Plastid</location>
        <location>Chloroplast thylakoid membrane</location>
        <topology>Multi-pass membrane protein</topology>
    </subcellularLocation>
</comment>
<comment type="similarity">
    <text evidence="2">Belongs to the Ycf4 family.</text>
</comment>
<name>YCF4_CHLRE</name>
<proteinExistence type="evidence at protein level"/>
<organism>
    <name type="scientific">Chlamydomonas reinhardtii</name>
    <name type="common">Chlamydomonas smithii</name>
    <dbReference type="NCBI Taxonomy" id="3055"/>
    <lineage>
        <taxon>Eukaryota</taxon>
        <taxon>Viridiplantae</taxon>
        <taxon>Chlorophyta</taxon>
        <taxon>core chlorophytes</taxon>
        <taxon>Chlorophyceae</taxon>
        <taxon>CS clade</taxon>
        <taxon>Chlamydomonadales</taxon>
        <taxon>Chlamydomonadaceae</taxon>
        <taxon>Chlamydomonas</taxon>
    </lineage>
</organism>
<feature type="chain" id="PRO_0000217601" description="Photosystem I assembly protein Ycf4">
    <location>
        <begin position="1"/>
        <end position="197"/>
    </location>
</feature>
<feature type="transmembrane region" description="Helical" evidence="1">
    <location>
        <begin position="21"/>
        <end position="43"/>
    </location>
</feature>
<feature type="transmembrane region" description="Helical" evidence="1">
    <location>
        <begin position="82"/>
        <end position="104"/>
    </location>
</feature>
<dbReference type="EMBL" id="Y13655">
    <property type="protein sequence ID" value="CAA74007.1"/>
    <property type="molecule type" value="Genomic_DNA"/>
</dbReference>
<dbReference type="EMBL" id="FJ423446">
    <property type="protein sequence ID" value="ACJ50125.1"/>
    <property type="molecule type" value="Genomic_DNA"/>
</dbReference>
<dbReference type="EMBL" id="BK000554">
    <property type="protein sequence ID" value="DAA00939.1"/>
    <property type="molecule type" value="Genomic_DNA"/>
</dbReference>
<dbReference type="PIR" id="T07995">
    <property type="entry name" value="T07995"/>
</dbReference>
<dbReference type="RefSeq" id="NP_958394.1">
    <property type="nucleotide sequence ID" value="NC_005353.1"/>
</dbReference>
<dbReference type="SMR" id="O20030"/>
<dbReference type="FunCoup" id="O20030">
    <property type="interactions" value="70"/>
</dbReference>
<dbReference type="STRING" id="3055.O20030"/>
<dbReference type="PaxDb" id="3055-DAA00939"/>
<dbReference type="GeneID" id="2717009"/>
<dbReference type="KEGG" id="cre:ChreCp038"/>
<dbReference type="eggNOG" id="ENOG502QWGG">
    <property type="taxonomic scope" value="Eukaryota"/>
</dbReference>
<dbReference type="HOGENOM" id="CLU_095465_0_0_1"/>
<dbReference type="InParanoid" id="O20030"/>
<dbReference type="BioCyc" id="MetaCyc:MONOMER-16596"/>
<dbReference type="Proteomes" id="UP000006906">
    <property type="component" value="Chloroplast"/>
</dbReference>
<dbReference type="GO" id="GO:0009535">
    <property type="term" value="C:chloroplast thylakoid membrane"/>
    <property type="evidence" value="ECO:0007669"/>
    <property type="project" value="UniProtKB-SubCell"/>
</dbReference>
<dbReference type="GO" id="GO:0009522">
    <property type="term" value="C:photosystem I"/>
    <property type="evidence" value="ECO:0007669"/>
    <property type="project" value="InterPro"/>
</dbReference>
<dbReference type="GO" id="GO:0015979">
    <property type="term" value="P:photosynthesis"/>
    <property type="evidence" value="ECO:0007669"/>
    <property type="project" value="UniProtKB-UniRule"/>
</dbReference>
<dbReference type="HAMAP" id="MF_00437">
    <property type="entry name" value="Ycf4"/>
    <property type="match status" value="1"/>
</dbReference>
<dbReference type="InterPro" id="IPR003359">
    <property type="entry name" value="PSI_Ycf4_assembly"/>
</dbReference>
<dbReference type="PANTHER" id="PTHR33288">
    <property type="match status" value="1"/>
</dbReference>
<dbReference type="PANTHER" id="PTHR33288:SF4">
    <property type="entry name" value="PHOTOSYSTEM I ASSEMBLY PROTEIN YCF4"/>
    <property type="match status" value="1"/>
</dbReference>
<dbReference type="Pfam" id="PF02392">
    <property type="entry name" value="Ycf4"/>
    <property type="match status" value="1"/>
</dbReference>
<keyword id="KW-0150">Chloroplast</keyword>
<keyword id="KW-0472">Membrane</keyword>
<keyword id="KW-0602">Photosynthesis</keyword>
<keyword id="KW-0934">Plastid</keyword>
<keyword id="KW-1185">Reference proteome</keyword>
<keyword id="KW-0793">Thylakoid</keyword>
<keyword id="KW-0812">Transmembrane</keyword>
<keyword id="KW-1133">Transmembrane helix</keyword>
<evidence type="ECO:0000255" key="1"/>
<evidence type="ECO:0000305" key="2"/>
<sequence length="197" mass="22423">MTQNNILIRRYIIVGERRFSNYWWAIVIFLGSCGFLATGICSYLGIPNWLSLLNIGTTFSSETETLASGIVPFFPQGLLMSFYGSLGFLLSIYWSLLIFWNVGGGFNEFNKKEGFVRIFRWGYPGKNRKIDLSYSLKDIEAIRVELKQGLDAQRTIYLRLKGKREIPLTGIGQPLTLKEIEKQASELANFLQVSLEA</sequence>
<gene>
    <name type="primary">ycf4</name>
</gene>
<reference key="1">
    <citation type="journal article" date="1997" name="EMBO J.">
        <title>The chloroplast ycf3 and ycf4 open reading frames of Chlamydomonas reinhardtii are required for the accumulation of the photosystem I complex.</title>
        <authorList>
            <person name="Boudreau E."/>
            <person name="Takahashi Y."/>
            <person name="Lemieux C."/>
            <person name="Turmel M."/>
            <person name="Rochaix J.-D."/>
        </authorList>
    </citation>
    <scope>NUCLEOTIDE SEQUENCE [GENOMIC DNA]</scope>
    <scope>CHARACTERIZATION</scope>
</reference>
<reference key="2">
    <citation type="journal article" date="2009" name="BMC Evol. Biol.">
        <title>Nucleotide diversity of the Chlamydomonas reinhardtii plastid genome: addressing the mutational-hazard hypothesis.</title>
        <authorList>
            <person name="Smith D.R."/>
            <person name="Lee R.W."/>
        </authorList>
    </citation>
    <scope>NUCLEOTIDE SEQUENCE [LARGE SCALE GENOMIC DNA]</scope>
    <source>
        <strain>CC-503</strain>
    </source>
</reference>
<reference key="3">
    <citation type="journal article" date="2002" name="Plant Cell">
        <title>The Chlamydomonas reinhardtii plastid chromosome: islands of genes in a sea of repeats.</title>
        <authorList>
            <person name="Maul J.E."/>
            <person name="Lilly J.W."/>
            <person name="Cui L."/>
            <person name="dePamphilis C.W."/>
            <person name="Miller W."/>
            <person name="Harris E.H."/>
            <person name="Stern D.B."/>
        </authorList>
    </citation>
    <scope>IDENTIFICATION</scope>
    <scope>COMPLETE PLASTID GENOME</scope>
</reference>
<protein>
    <recommendedName>
        <fullName>Photosystem I assembly protein Ycf4</fullName>
    </recommendedName>
</protein>